<accession>Q8RB69</accession>
<evidence type="ECO:0000255" key="1">
    <source>
        <dbReference type="HAMAP-Rule" id="MF_01151"/>
    </source>
</evidence>
<evidence type="ECO:0000256" key="2">
    <source>
        <dbReference type="SAM" id="MobiDB-lite"/>
    </source>
</evidence>
<proteinExistence type="inferred from homology"/>
<keyword id="KW-0143">Chaperone</keyword>
<keyword id="KW-0963">Cytoplasm</keyword>
<keyword id="KW-1185">Reference proteome</keyword>
<keyword id="KW-0346">Stress response</keyword>
<name>GRPE_CALS4</name>
<feature type="chain" id="PRO_0000113885" description="Protein GrpE">
    <location>
        <begin position="1"/>
        <end position="204"/>
    </location>
</feature>
<feature type="region of interest" description="Disordered" evidence="2">
    <location>
        <begin position="1"/>
        <end position="46"/>
    </location>
</feature>
<feature type="compositionally biased region" description="Basic and acidic residues" evidence="2">
    <location>
        <begin position="1"/>
        <end position="21"/>
    </location>
</feature>
<feature type="compositionally biased region" description="Basic and acidic residues" evidence="2">
    <location>
        <begin position="36"/>
        <end position="46"/>
    </location>
</feature>
<comment type="function">
    <text evidence="1">Participates actively in the response to hyperosmotic and heat shock by preventing the aggregation of stress-denatured proteins, in association with DnaK and GrpE. It is the nucleotide exchange factor for DnaK and may function as a thermosensor. Unfolded proteins bind initially to DnaJ; upon interaction with the DnaJ-bound protein, DnaK hydrolyzes its bound ATP, resulting in the formation of a stable complex. GrpE releases ADP from DnaK; ATP binding to DnaK triggers the release of the substrate protein, thus completing the reaction cycle. Several rounds of ATP-dependent interactions between DnaJ, DnaK and GrpE are required for fully efficient folding.</text>
</comment>
<comment type="subunit">
    <text evidence="1">Homodimer.</text>
</comment>
<comment type="subcellular location">
    <subcellularLocation>
        <location evidence="1">Cytoplasm</location>
    </subcellularLocation>
</comment>
<comment type="similarity">
    <text evidence="1">Belongs to the GrpE family.</text>
</comment>
<protein>
    <recommendedName>
        <fullName evidence="1">Protein GrpE</fullName>
    </recommendedName>
    <alternativeName>
        <fullName evidence="1">HSP-70 cofactor</fullName>
    </alternativeName>
</protein>
<sequence>MEELEKDKIERNEEMSEEVKGEGPPSELEQSEEVVEEKIETEVEQKKEPSLEEIVEELRKKLEEKEKEAKEYLDIAQRIKAEFDNYRKRTEKEKAEMISYGQEQVIIELLPVIDNFERALANEGDYNSLREGLELIYRQFKKVLDKFEVREIEAEGQMFDPYKHHALAQEEVEGKQPNEIIEVFQKGYYLKDKVIRPSLVKVAK</sequence>
<gene>
    <name evidence="1" type="primary">grpE</name>
    <name type="ordered locus">TTE0954</name>
</gene>
<reference key="1">
    <citation type="journal article" date="2002" name="Genome Res.">
        <title>A complete sequence of the T. tengcongensis genome.</title>
        <authorList>
            <person name="Bao Q."/>
            <person name="Tian Y."/>
            <person name="Li W."/>
            <person name="Xu Z."/>
            <person name="Xuan Z."/>
            <person name="Hu S."/>
            <person name="Dong W."/>
            <person name="Yang J."/>
            <person name="Chen Y."/>
            <person name="Xue Y."/>
            <person name="Xu Y."/>
            <person name="Lai X."/>
            <person name="Huang L."/>
            <person name="Dong X."/>
            <person name="Ma Y."/>
            <person name="Ling L."/>
            <person name="Tan H."/>
            <person name="Chen R."/>
            <person name="Wang J."/>
            <person name="Yu J."/>
            <person name="Yang H."/>
        </authorList>
    </citation>
    <scope>NUCLEOTIDE SEQUENCE [LARGE SCALE GENOMIC DNA]</scope>
    <source>
        <strain>DSM 15242 / JCM 11007 / NBRC 100824 / MB4</strain>
    </source>
</reference>
<dbReference type="EMBL" id="AE008691">
    <property type="protein sequence ID" value="AAM24210.1"/>
    <property type="molecule type" value="Genomic_DNA"/>
</dbReference>
<dbReference type="RefSeq" id="WP_011025329.1">
    <property type="nucleotide sequence ID" value="NC_003869.1"/>
</dbReference>
<dbReference type="SMR" id="Q8RB69"/>
<dbReference type="STRING" id="273068.TTE0954"/>
<dbReference type="KEGG" id="tte:TTE0954"/>
<dbReference type="eggNOG" id="COG0576">
    <property type="taxonomic scope" value="Bacteria"/>
</dbReference>
<dbReference type="HOGENOM" id="CLU_057217_5_2_9"/>
<dbReference type="OrthoDB" id="9812586at2"/>
<dbReference type="Proteomes" id="UP000000555">
    <property type="component" value="Chromosome"/>
</dbReference>
<dbReference type="GO" id="GO:0005737">
    <property type="term" value="C:cytoplasm"/>
    <property type="evidence" value="ECO:0007669"/>
    <property type="project" value="UniProtKB-SubCell"/>
</dbReference>
<dbReference type="GO" id="GO:0000774">
    <property type="term" value="F:adenyl-nucleotide exchange factor activity"/>
    <property type="evidence" value="ECO:0007669"/>
    <property type="project" value="InterPro"/>
</dbReference>
<dbReference type="GO" id="GO:0042803">
    <property type="term" value="F:protein homodimerization activity"/>
    <property type="evidence" value="ECO:0007669"/>
    <property type="project" value="InterPro"/>
</dbReference>
<dbReference type="GO" id="GO:0051087">
    <property type="term" value="F:protein-folding chaperone binding"/>
    <property type="evidence" value="ECO:0007669"/>
    <property type="project" value="InterPro"/>
</dbReference>
<dbReference type="GO" id="GO:0051082">
    <property type="term" value="F:unfolded protein binding"/>
    <property type="evidence" value="ECO:0007669"/>
    <property type="project" value="TreeGrafter"/>
</dbReference>
<dbReference type="GO" id="GO:0006457">
    <property type="term" value="P:protein folding"/>
    <property type="evidence" value="ECO:0007669"/>
    <property type="project" value="InterPro"/>
</dbReference>
<dbReference type="CDD" id="cd00446">
    <property type="entry name" value="GrpE"/>
    <property type="match status" value="1"/>
</dbReference>
<dbReference type="FunFam" id="2.30.22.10:FF:000001">
    <property type="entry name" value="Protein GrpE"/>
    <property type="match status" value="1"/>
</dbReference>
<dbReference type="Gene3D" id="3.90.20.20">
    <property type="match status" value="1"/>
</dbReference>
<dbReference type="Gene3D" id="2.30.22.10">
    <property type="entry name" value="Head domain of nucleotide exchange factor GrpE"/>
    <property type="match status" value="1"/>
</dbReference>
<dbReference type="HAMAP" id="MF_01151">
    <property type="entry name" value="GrpE"/>
    <property type="match status" value="1"/>
</dbReference>
<dbReference type="InterPro" id="IPR000740">
    <property type="entry name" value="GrpE"/>
</dbReference>
<dbReference type="InterPro" id="IPR013805">
    <property type="entry name" value="GrpE_coiled_coil"/>
</dbReference>
<dbReference type="InterPro" id="IPR009012">
    <property type="entry name" value="GrpE_head"/>
</dbReference>
<dbReference type="NCBIfam" id="NF010738">
    <property type="entry name" value="PRK14140.1"/>
    <property type="match status" value="1"/>
</dbReference>
<dbReference type="NCBIfam" id="NF010743">
    <property type="entry name" value="PRK14145.1"/>
    <property type="match status" value="1"/>
</dbReference>
<dbReference type="PANTHER" id="PTHR21237">
    <property type="entry name" value="GRPE PROTEIN"/>
    <property type="match status" value="1"/>
</dbReference>
<dbReference type="PANTHER" id="PTHR21237:SF23">
    <property type="entry name" value="GRPE PROTEIN HOMOLOG, MITOCHONDRIAL"/>
    <property type="match status" value="1"/>
</dbReference>
<dbReference type="Pfam" id="PF01025">
    <property type="entry name" value="GrpE"/>
    <property type="match status" value="1"/>
</dbReference>
<dbReference type="PRINTS" id="PR00773">
    <property type="entry name" value="GRPEPROTEIN"/>
</dbReference>
<dbReference type="SUPFAM" id="SSF58014">
    <property type="entry name" value="Coiled-coil domain of nucleotide exchange factor GrpE"/>
    <property type="match status" value="1"/>
</dbReference>
<dbReference type="SUPFAM" id="SSF51064">
    <property type="entry name" value="Head domain of nucleotide exchange factor GrpE"/>
    <property type="match status" value="1"/>
</dbReference>
<dbReference type="PROSITE" id="PS01071">
    <property type="entry name" value="GRPE"/>
    <property type="match status" value="1"/>
</dbReference>
<organism>
    <name type="scientific">Caldanaerobacter subterraneus subsp. tengcongensis (strain DSM 15242 / JCM 11007 / NBRC 100824 / MB4)</name>
    <name type="common">Thermoanaerobacter tengcongensis</name>
    <dbReference type="NCBI Taxonomy" id="273068"/>
    <lineage>
        <taxon>Bacteria</taxon>
        <taxon>Bacillati</taxon>
        <taxon>Bacillota</taxon>
        <taxon>Clostridia</taxon>
        <taxon>Thermoanaerobacterales</taxon>
        <taxon>Thermoanaerobacteraceae</taxon>
        <taxon>Caldanaerobacter</taxon>
    </lineage>
</organism>